<keyword id="KW-0133">Cell shape</keyword>
<keyword id="KW-0963">Cytoplasm</keyword>
<keyword id="KW-0206">Cytoskeleton</keyword>
<keyword id="KW-0472">Membrane</keyword>
<keyword id="KW-0597">Phosphoprotein</keyword>
<keyword id="KW-1185">Reference proteome</keyword>
<feature type="chain" id="PRO_0000212652" description="Cdc42 effector protein 3">
    <location>
        <begin position="1"/>
        <end position="254"/>
    </location>
</feature>
<feature type="domain" description="CRIB" evidence="2">
    <location>
        <begin position="31"/>
        <end position="45"/>
    </location>
</feature>
<feature type="region of interest" description="Disordered" evidence="3">
    <location>
        <begin position="165"/>
        <end position="205"/>
    </location>
</feature>
<feature type="compositionally biased region" description="Low complexity" evidence="3">
    <location>
        <begin position="171"/>
        <end position="197"/>
    </location>
</feature>
<feature type="modified residue" description="Phosphotyrosine" evidence="5">
    <location>
        <position position="63"/>
    </location>
</feature>
<feature type="modified residue" description="Phosphoserine" evidence="6">
    <location>
        <position position="89"/>
    </location>
</feature>
<feature type="modified residue" description="Phosphoserine" evidence="5">
    <location>
        <position position="108"/>
    </location>
</feature>
<feature type="modified residue" description="Phosphoserine" evidence="6">
    <location>
        <position position="144"/>
    </location>
</feature>
<sequence>MPAKTPIYLKAANNKKGKKFKLRDILSPDMISPPLGDFRHTIHIGKEGQHDVFGDISFLQGNYELLPGNQEKAHSGQFPGHNDFFRANSTSDSMFTETPSPVLKNAISLPTIGGSQALMLPLLSPVTFHSKQESFGRPKLPRLSCEPVMEEKVQEQSSLLENGAVHQGDTSWGSSGSGSQSSQGRDSHSSSLSEQSSDWPADDMFEHPASCELVKSKTKSEESFSDLTGSLLSLQLDLGPSLLDEVLNVMDKNK</sequence>
<organism>
    <name type="scientific">Mus musculus</name>
    <name type="common">Mouse</name>
    <dbReference type="NCBI Taxonomy" id="10090"/>
    <lineage>
        <taxon>Eukaryota</taxon>
        <taxon>Metazoa</taxon>
        <taxon>Chordata</taxon>
        <taxon>Craniata</taxon>
        <taxon>Vertebrata</taxon>
        <taxon>Euteleostomi</taxon>
        <taxon>Mammalia</taxon>
        <taxon>Eutheria</taxon>
        <taxon>Euarchontoglires</taxon>
        <taxon>Glires</taxon>
        <taxon>Rodentia</taxon>
        <taxon>Myomorpha</taxon>
        <taxon>Muroidea</taxon>
        <taxon>Muridae</taxon>
        <taxon>Murinae</taxon>
        <taxon>Mus</taxon>
        <taxon>Mus</taxon>
    </lineage>
</organism>
<reference key="1">
    <citation type="journal article" date="2005" name="Science">
        <title>The transcriptional landscape of the mammalian genome.</title>
        <authorList>
            <person name="Carninci P."/>
            <person name="Kasukawa T."/>
            <person name="Katayama S."/>
            <person name="Gough J."/>
            <person name="Frith M.C."/>
            <person name="Maeda N."/>
            <person name="Oyama R."/>
            <person name="Ravasi T."/>
            <person name="Lenhard B."/>
            <person name="Wells C."/>
            <person name="Kodzius R."/>
            <person name="Shimokawa K."/>
            <person name="Bajic V.B."/>
            <person name="Brenner S.E."/>
            <person name="Batalov S."/>
            <person name="Forrest A.R."/>
            <person name="Zavolan M."/>
            <person name="Davis M.J."/>
            <person name="Wilming L.G."/>
            <person name="Aidinis V."/>
            <person name="Allen J.E."/>
            <person name="Ambesi-Impiombato A."/>
            <person name="Apweiler R."/>
            <person name="Aturaliya R.N."/>
            <person name="Bailey T.L."/>
            <person name="Bansal M."/>
            <person name="Baxter L."/>
            <person name="Beisel K.W."/>
            <person name="Bersano T."/>
            <person name="Bono H."/>
            <person name="Chalk A.M."/>
            <person name="Chiu K.P."/>
            <person name="Choudhary V."/>
            <person name="Christoffels A."/>
            <person name="Clutterbuck D.R."/>
            <person name="Crowe M.L."/>
            <person name="Dalla E."/>
            <person name="Dalrymple B.P."/>
            <person name="de Bono B."/>
            <person name="Della Gatta G."/>
            <person name="di Bernardo D."/>
            <person name="Down T."/>
            <person name="Engstrom P."/>
            <person name="Fagiolini M."/>
            <person name="Faulkner G."/>
            <person name="Fletcher C.F."/>
            <person name="Fukushima T."/>
            <person name="Furuno M."/>
            <person name="Futaki S."/>
            <person name="Gariboldi M."/>
            <person name="Georgii-Hemming P."/>
            <person name="Gingeras T.R."/>
            <person name="Gojobori T."/>
            <person name="Green R.E."/>
            <person name="Gustincich S."/>
            <person name="Harbers M."/>
            <person name="Hayashi Y."/>
            <person name="Hensch T.K."/>
            <person name="Hirokawa N."/>
            <person name="Hill D."/>
            <person name="Huminiecki L."/>
            <person name="Iacono M."/>
            <person name="Ikeo K."/>
            <person name="Iwama A."/>
            <person name="Ishikawa T."/>
            <person name="Jakt M."/>
            <person name="Kanapin A."/>
            <person name="Katoh M."/>
            <person name="Kawasawa Y."/>
            <person name="Kelso J."/>
            <person name="Kitamura H."/>
            <person name="Kitano H."/>
            <person name="Kollias G."/>
            <person name="Krishnan S.P."/>
            <person name="Kruger A."/>
            <person name="Kummerfeld S.K."/>
            <person name="Kurochkin I.V."/>
            <person name="Lareau L.F."/>
            <person name="Lazarevic D."/>
            <person name="Lipovich L."/>
            <person name="Liu J."/>
            <person name="Liuni S."/>
            <person name="McWilliam S."/>
            <person name="Madan Babu M."/>
            <person name="Madera M."/>
            <person name="Marchionni L."/>
            <person name="Matsuda H."/>
            <person name="Matsuzawa S."/>
            <person name="Miki H."/>
            <person name="Mignone F."/>
            <person name="Miyake S."/>
            <person name="Morris K."/>
            <person name="Mottagui-Tabar S."/>
            <person name="Mulder N."/>
            <person name="Nakano N."/>
            <person name="Nakauchi H."/>
            <person name="Ng P."/>
            <person name="Nilsson R."/>
            <person name="Nishiguchi S."/>
            <person name="Nishikawa S."/>
            <person name="Nori F."/>
            <person name="Ohara O."/>
            <person name="Okazaki Y."/>
            <person name="Orlando V."/>
            <person name="Pang K.C."/>
            <person name="Pavan W.J."/>
            <person name="Pavesi G."/>
            <person name="Pesole G."/>
            <person name="Petrovsky N."/>
            <person name="Piazza S."/>
            <person name="Reed J."/>
            <person name="Reid J.F."/>
            <person name="Ring B.Z."/>
            <person name="Ringwald M."/>
            <person name="Rost B."/>
            <person name="Ruan Y."/>
            <person name="Salzberg S.L."/>
            <person name="Sandelin A."/>
            <person name="Schneider C."/>
            <person name="Schoenbach C."/>
            <person name="Sekiguchi K."/>
            <person name="Semple C.A."/>
            <person name="Seno S."/>
            <person name="Sessa L."/>
            <person name="Sheng Y."/>
            <person name="Shibata Y."/>
            <person name="Shimada H."/>
            <person name="Shimada K."/>
            <person name="Silva D."/>
            <person name="Sinclair B."/>
            <person name="Sperling S."/>
            <person name="Stupka E."/>
            <person name="Sugiura K."/>
            <person name="Sultana R."/>
            <person name="Takenaka Y."/>
            <person name="Taki K."/>
            <person name="Tammoja K."/>
            <person name="Tan S.L."/>
            <person name="Tang S."/>
            <person name="Taylor M.S."/>
            <person name="Tegner J."/>
            <person name="Teichmann S.A."/>
            <person name="Ueda H.R."/>
            <person name="van Nimwegen E."/>
            <person name="Verardo R."/>
            <person name="Wei C.L."/>
            <person name="Yagi K."/>
            <person name="Yamanishi H."/>
            <person name="Zabarovsky E."/>
            <person name="Zhu S."/>
            <person name="Zimmer A."/>
            <person name="Hide W."/>
            <person name="Bult C."/>
            <person name="Grimmond S.M."/>
            <person name="Teasdale R.D."/>
            <person name="Liu E.T."/>
            <person name="Brusic V."/>
            <person name="Quackenbush J."/>
            <person name="Wahlestedt C."/>
            <person name="Mattick J.S."/>
            <person name="Hume D.A."/>
            <person name="Kai C."/>
            <person name="Sasaki D."/>
            <person name="Tomaru Y."/>
            <person name="Fukuda S."/>
            <person name="Kanamori-Katayama M."/>
            <person name="Suzuki M."/>
            <person name="Aoki J."/>
            <person name="Arakawa T."/>
            <person name="Iida J."/>
            <person name="Imamura K."/>
            <person name="Itoh M."/>
            <person name="Kato T."/>
            <person name="Kawaji H."/>
            <person name="Kawagashira N."/>
            <person name="Kawashima T."/>
            <person name="Kojima M."/>
            <person name="Kondo S."/>
            <person name="Konno H."/>
            <person name="Nakano K."/>
            <person name="Ninomiya N."/>
            <person name="Nishio T."/>
            <person name="Okada M."/>
            <person name="Plessy C."/>
            <person name="Shibata K."/>
            <person name="Shiraki T."/>
            <person name="Suzuki S."/>
            <person name="Tagami M."/>
            <person name="Waki K."/>
            <person name="Watahiki A."/>
            <person name="Okamura-Oho Y."/>
            <person name="Suzuki H."/>
            <person name="Kawai J."/>
            <person name="Hayashizaki Y."/>
        </authorList>
    </citation>
    <scope>NUCLEOTIDE SEQUENCE [LARGE SCALE MRNA]</scope>
    <source>
        <strain>C57BL/6J</strain>
        <tissue>Bone marrow</tissue>
        <tissue>Embryo</tissue>
        <tissue>Head</tissue>
    </source>
</reference>
<reference key="2">
    <citation type="journal article" date="2004" name="Genome Res.">
        <title>The status, quality, and expansion of the NIH full-length cDNA project: the Mammalian Gene Collection (MGC).</title>
        <authorList>
            <consortium name="The MGC Project Team"/>
        </authorList>
    </citation>
    <scope>NUCLEOTIDE SEQUENCE [LARGE SCALE MRNA]</scope>
    <source>
        <strain>129</strain>
        <strain>FVB/N</strain>
        <strain>FVB/N-3</strain>
        <tissue>Mammary tumor</tissue>
    </source>
</reference>
<reference key="3">
    <citation type="journal article" date="2004" name="Mol. Cell. Proteomics">
        <title>Phosphoproteomic analysis of the developing mouse brain.</title>
        <authorList>
            <person name="Ballif B.A."/>
            <person name="Villen J."/>
            <person name="Beausoleil S.A."/>
            <person name="Schwartz D."/>
            <person name="Gygi S.P."/>
        </authorList>
    </citation>
    <scope>IDENTIFICATION BY MASS SPECTROMETRY [LARGE SCALE ANALYSIS]</scope>
    <source>
        <tissue>Embryonic brain</tissue>
    </source>
</reference>
<reference key="4">
    <citation type="journal article" date="2009" name="Mol. Cell. Proteomics">
        <title>Large scale localization of protein phosphorylation by use of electron capture dissociation mass spectrometry.</title>
        <authorList>
            <person name="Sweet S.M."/>
            <person name="Bailey C.M."/>
            <person name="Cunningham D.L."/>
            <person name="Heath J.K."/>
            <person name="Cooper H.J."/>
        </authorList>
    </citation>
    <scope>PHOSPHORYLATION [LARGE SCALE ANALYSIS] AT TYR-63 AND SER-108</scope>
    <scope>IDENTIFICATION BY MASS SPECTROMETRY [LARGE SCALE ANALYSIS]</scope>
    <source>
        <tissue>Embryonic fibroblast</tissue>
    </source>
</reference>
<reference key="5">
    <citation type="journal article" date="2010" name="Cell">
        <title>A tissue-specific atlas of mouse protein phosphorylation and expression.</title>
        <authorList>
            <person name="Huttlin E.L."/>
            <person name="Jedrychowski M.P."/>
            <person name="Elias J.E."/>
            <person name="Goswami T."/>
            <person name="Rad R."/>
            <person name="Beausoleil S.A."/>
            <person name="Villen J."/>
            <person name="Haas W."/>
            <person name="Sowa M.E."/>
            <person name="Gygi S.P."/>
        </authorList>
    </citation>
    <scope>PHOSPHORYLATION [LARGE SCALE ANALYSIS] AT SER-89 AND SER-144</scope>
    <scope>IDENTIFICATION BY MASS SPECTROMETRY [LARGE SCALE ANALYSIS]</scope>
    <source>
        <tissue>Kidney</tissue>
        <tissue>Lung</tissue>
    </source>
</reference>
<accession>Q9CQC5</accession>
<accession>Q3UD77</accession>
<accession>Q8BVR7</accession>
<dbReference type="EMBL" id="AK012309">
    <property type="protein sequence ID" value="BAB28155.1"/>
    <property type="molecule type" value="mRNA"/>
</dbReference>
<dbReference type="EMBL" id="AK014281">
    <property type="protein sequence ID" value="BAB29241.1"/>
    <property type="molecule type" value="mRNA"/>
</dbReference>
<dbReference type="EMBL" id="AK019447">
    <property type="protein sequence ID" value="BAB31723.1"/>
    <property type="molecule type" value="mRNA"/>
</dbReference>
<dbReference type="EMBL" id="AK076782">
    <property type="protein sequence ID" value="BAC36479.1"/>
    <property type="status" value="ALT_FRAME"/>
    <property type="molecule type" value="mRNA"/>
</dbReference>
<dbReference type="EMBL" id="AK150214">
    <property type="protein sequence ID" value="BAE29384.1"/>
    <property type="molecule type" value="mRNA"/>
</dbReference>
<dbReference type="EMBL" id="BC021409">
    <property type="protein sequence ID" value="AAH21409.1"/>
    <property type="molecule type" value="mRNA"/>
</dbReference>
<dbReference type="EMBL" id="BC034714">
    <property type="protein sequence ID" value="AAH34714.1"/>
    <property type="molecule type" value="mRNA"/>
</dbReference>
<dbReference type="EMBL" id="BC092297">
    <property type="protein sequence ID" value="AAH92297.1"/>
    <property type="molecule type" value="mRNA"/>
</dbReference>
<dbReference type="CCDS" id="CCDS28984.1"/>
<dbReference type="RefSeq" id="NP_080790.1">
    <property type="nucleotide sequence ID" value="NM_026514.3"/>
</dbReference>
<dbReference type="RefSeq" id="XP_006524358.1">
    <property type="nucleotide sequence ID" value="XM_006524295.5"/>
</dbReference>
<dbReference type="FunCoup" id="Q9CQC5">
    <property type="interactions" value="430"/>
</dbReference>
<dbReference type="STRING" id="10090.ENSMUSP00000067217"/>
<dbReference type="iPTMnet" id="Q9CQC5"/>
<dbReference type="PhosphoSitePlus" id="Q9CQC5"/>
<dbReference type="PaxDb" id="10090-ENSMUSP00000067217"/>
<dbReference type="ProteomicsDB" id="265450"/>
<dbReference type="Pumba" id="Q9CQC5"/>
<dbReference type="Antibodypedia" id="29451">
    <property type="antibodies" value="197 antibodies from 28 providers"/>
</dbReference>
<dbReference type="DNASU" id="260409"/>
<dbReference type="Ensembl" id="ENSMUST00000068958.9">
    <property type="protein sequence ID" value="ENSMUSP00000067217.8"/>
    <property type="gene ID" value="ENSMUSG00000036533.10"/>
</dbReference>
<dbReference type="GeneID" id="260409"/>
<dbReference type="KEGG" id="mmu:260409"/>
<dbReference type="UCSC" id="uc008dpx.1">
    <property type="organism name" value="mouse"/>
</dbReference>
<dbReference type="AGR" id="MGI:2384718"/>
<dbReference type="CTD" id="10602"/>
<dbReference type="MGI" id="MGI:2384718">
    <property type="gene designation" value="Cdc42ep3"/>
</dbReference>
<dbReference type="VEuPathDB" id="HostDB:ENSMUSG00000036533"/>
<dbReference type="eggNOG" id="ENOG502RKYM">
    <property type="taxonomic scope" value="Eukaryota"/>
</dbReference>
<dbReference type="GeneTree" id="ENSGT00940000157736"/>
<dbReference type="HOGENOM" id="CLU_073229_0_0_1"/>
<dbReference type="InParanoid" id="Q9CQC5"/>
<dbReference type="OMA" id="IHQGDTS"/>
<dbReference type="OrthoDB" id="9948028at2759"/>
<dbReference type="PhylomeDB" id="Q9CQC5"/>
<dbReference type="TreeFam" id="TF331725"/>
<dbReference type="Reactome" id="R-MMU-5687128">
    <property type="pathway name" value="MAPK6/MAPK4 signaling"/>
</dbReference>
<dbReference type="Reactome" id="R-MMU-9013406">
    <property type="pathway name" value="RHOQ GTPase cycle"/>
</dbReference>
<dbReference type="BioGRID-ORCS" id="260409">
    <property type="hits" value="1 hit in 78 CRISPR screens"/>
</dbReference>
<dbReference type="ChiTaRS" id="Cdc42ep3">
    <property type="organism name" value="mouse"/>
</dbReference>
<dbReference type="PRO" id="PR:Q9CQC5"/>
<dbReference type="Proteomes" id="UP000000589">
    <property type="component" value="Chromosome 17"/>
</dbReference>
<dbReference type="RNAct" id="Q9CQC5">
    <property type="molecule type" value="protein"/>
</dbReference>
<dbReference type="Bgee" id="ENSMUSG00000036533">
    <property type="expression patterns" value="Expressed in spermatocyte and 247 other cell types or tissues"/>
</dbReference>
<dbReference type="ExpressionAtlas" id="Q9CQC5">
    <property type="expression patterns" value="baseline and differential"/>
</dbReference>
<dbReference type="GO" id="GO:0015629">
    <property type="term" value="C:actin cytoskeleton"/>
    <property type="evidence" value="ECO:0007669"/>
    <property type="project" value="Ensembl"/>
</dbReference>
<dbReference type="GO" id="GO:0005737">
    <property type="term" value="C:cytoplasm"/>
    <property type="evidence" value="ECO:0007669"/>
    <property type="project" value="UniProtKB-KW"/>
</dbReference>
<dbReference type="GO" id="GO:0012505">
    <property type="term" value="C:endomembrane system"/>
    <property type="evidence" value="ECO:0007669"/>
    <property type="project" value="UniProtKB-SubCell"/>
</dbReference>
<dbReference type="GO" id="GO:0005886">
    <property type="term" value="C:plasma membrane"/>
    <property type="evidence" value="ECO:0007669"/>
    <property type="project" value="Ensembl"/>
</dbReference>
<dbReference type="GO" id="GO:0008360">
    <property type="term" value="P:regulation of cell shape"/>
    <property type="evidence" value="ECO:0007669"/>
    <property type="project" value="UniProtKB-KW"/>
</dbReference>
<dbReference type="InterPro" id="IPR029273">
    <property type="entry name" value="Cdc42_effect-like"/>
</dbReference>
<dbReference type="InterPro" id="IPR051296">
    <property type="entry name" value="Cdc42_Effector_BORG/CEP"/>
</dbReference>
<dbReference type="InterPro" id="IPR000095">
    <property type="entry name" value="CRIB_dom"/>
</dbReference>
<dbReference type="PANTHER" id="PTHR15344:SF3">
    <property type="entry name" value="CDC42 EFFECTOR PROTEIN 3"/>
    <property type="match status" value="1"/>
</dbReference>
<dbReference type="PANTHER" id="PTHR15344">
    <property type="entry name" value="CDC42 EFFECTOR PROTEIN BORG"/>
    <property type="match status" value="1"/>
</dbReference>
<dbReference type="Pfam" id="PF14957">
    <property type="entry name" value="BORG_CEP"/>
    <property type="match status" value="1"/>
</dbReference>
<dbReference type="Pfam" id="PF00786">
    <property type="entry name" value="PBD"/>
    <property type="match status" value="1"/>
</dbReference>
<dbReference type="SMART" id="SM00285">
    <property type="entry name" value="PBD"/>
    <property type="match status" value="1"/>
</dbReference>
<dbReference type="PROSITE" id="PS50108">
    <property type="entry name" value="CRIB"/>
    <property type="match status" value="1"/>
</dbReference>
<evidence type="ECO:0000250" key="1"/>
<evidence type="ECO:0000255" key="2">
    <source>
        <dbReference type="PROSITE-ProRule" id="PRU00057"/>
    </source>
</evidence>
<evidence type="ECO:0000256" key="3">
    <source>
        <dbReference type="SAM" id="MobiDB-lite"/>
    </source>
</evidence>
<evidence type="ECO:0000305" key="4"/>
<evidence type="ECO:0007744" key="5">
    <source>
    </source>
</evidence>
<evidence type="ECO:0007744" key="6">
    <source>
    </source>
</evidence>
<name>BORG2_MOUSE</name>
<protein>
    <recommendedName>
        <fullName>Cdc42 effector protein 3</fullName>
    </recommendedName>
    <alternativeName>
        <fullName>Binder of Rho GTPases 2</fullName>
    </alternativeName>
</protein>
<comment type="function">
    <text evidence="1">Probably involved in the organization of the actin cytoskeleton. May act downstream of CDC42 to induce actin filament assembly leading to cell shape changes. Induces pseudopodia formation in fibroblasts (By similarity).</text>
</comment>
<comment type="subunit">
    <text evidence="1">Interacts with RHOQ and CDC42, in a GTP-dependent manner, and with SEPT7.</text>
</comment>
<comment type="subcellular location">
    <subcellularLocation>
        <location evidence="1">Endomembrane system</location>
        <topology evidence="1">Peripheral membrane protein</topology>
    </subcellularLocation>
    <subcellularLocation>
        <location evidence="1">Cytoplasm</location>
        <location evidence="1">Cytoskeleton</location>
    </subcellularLocation>
</comment>
<comment type="similarity">
    <text evidence="4">Belongs to the BORG/CEP family.</text>
</comment>
<comment type="sequence caution" evidence="4">
    <conflict type="frameshift">
        <sequence resource="EMBL-CDS" id="BAC36479"/>
    </conflict>
</comment>
<gene>
    <name type="primary">Cdc42ep3</name>
    <name type="synonym">Borg2</name>
    <name type="synonym">Cep3</name>
</gene>
<proteinExistence type="evidence at protein level"/>